<gene>
    <name type="primary">efeB</name>
    <name type="ordered locus">YPN_2267</name>
    <name type="ORF">YP516_2548</name>
</gene>
<protein>
    <recommendedName>
        <fullName>Deferrochelatase</fullName>
        <ecNumber evidence="2">4.98.1.1</ecNumber>
    </recommendedName>
    <alternativeName>
        <fullName>Peroxidase EfeB</fullName>
        <ecNumber evidence="2">1.11.1.-</ecNumber>
    </alternativeName>
</protein>
<feature type="signal peptide" description="Tat-type signal" evidence="3">
    <location>
        <begin position="1"/>
        <end position="45"/>
    </location>
</feature>
<feature type="chain" id="PRO_0000278552" description="Deferrochelatase">
    <location>
        <begin position="46"/>
        <end position="434"/>
    </location>
</feature>
<feature type="binding site" evidence="2">
    <location>
        <begin position="247"/>
        <end position="249"/>
    </location>
    <ligand>
        <name>heme b</name>
        <dbReference type="ChEBI" id="CHEBI:60344"/>
    </ligand>
</feature>
<feature type="binding site" description="proximal binding residue" evidence="2">
    <location>
        <position position="340"/>
    </location>
    <ligand>
        <name>heme b</name>
        <dbReference type="ChEBI" id="CHEBI:60344"/>
    </ligand>
    <ligandPart>
        <name>Fe</name>
        <dbReference type="ChEBI" id="CHEBI:18248"/>
    </ligandPart>
</feature>
<feature type="binding site" evidence="2">
    <location>
        <begin position="345"/>
        <end position="347"/>
    </location>
    <ligand>
        <name>heme b</name>
        <dbReference type="ChEBI" id="CHEBI:60344"/>
    </ligand>
</feature>
<feature type="binding site" evidence="2">
    <location>
        <position position="358"/>
    </location>
    <ligand>
        <name>heme b</name>
        <dbReference type="ChEBI" id="CHEBI:60344"/>
    </ligand>
</feature>
<dbReference type="EC" id="4.98.1.1" evidence="2"/>
<dbReference type="EC" id="1.11.1.-" evidence="2"/>
<dbReference type="EMBL" id="CP000305">
    <property type="protein sequence ID" value="ABG18595.1"/>
    <property type="molecule type" value="Genomic_DNA"/>
</dbReference>
<dbReference type="EMBL" id="ACNQ01000013">
    <property type="protein sequence ID" value="EEO76346.1"/>
    <property type="molecule type" value="Genomic_DNA"/>
</dbReference>
<dbReference type="RefSeq" id="WP_002211167.1">
    <property type="nucleotide sequence ID" value="NZ_ACNQ01000013.1"/>
</dbReference>
<dbReference type="SMR" id="Q1CHD5"/>
<dbReference type="PeroxiBase" id="5876">
    <property type="entry name" value="YpDyPrx01"/>
</dbReference>
<dbReference type="GeneID" id="57976725"/>
<dbReference type="KEGG" id="ypn:YPN_2267"/>
<dbReference type="HOGENOM" id="CLU_039488_0_0_6"/>
<dbReference type="Proteomes" id="UP000008936">
    <property type="component" value="Chromosome"/>
</dbReference>
<dbReference type="GO" id="GO:0005829">
    <property type="term" value="C:cytosol"/>
    <property type="evidence" value="ECO:0007669"/>
    <property type="project" value="TreeGrafter"/>
</dbReference>
<dbReference type="GO" id="GO:0042597">
    <property type="term" value="C:periplasmic space"/>
    <property type="evidence" value="ECO:0007669"/>
    <property type="project" value="UniProtKB-SubCell"/>
</dbReference>
<dbReference type="GO" id="GO:0004325">
    <property type="term" value="F:ferrochelatase activity"/>
    <property type="evidence" value="ECO:0007669"/>
    <property type="project" value="RHEA"/>
</dbReference>
<dbReference type="GO" id="GO:0020037">
    <property type="term" value="F:heme binding"/>
    <property type="evidence" value="ECO:0007669"/>
    <property type="project" value="InterPro"/>
</dbReference>
<dbReference type="GO" id="GO:0046872">
    <property type="term" value="F:metal ion binding"/>
    <property type="evidence" value="ECO:0007669"/>
    <property type="project" value="UniProtKB-KW"/>
</dbReference>
<dbReference type="GO" id="GO:0004601">
    <property type="term" value="F:peroxidase activity"/>
    <property type="evidence" value="ECO:0007669"/>
    <property type="project" value="UniProtKB-KW"/>
</dbReference>
<dbReference type="GO" id="GO:0033212">
    <property type="term" value="P:iron import into cell"/>
    <property type="evidence" value="ECO:0007669"/>
    <property type="project" value="InterPro"/>
</dbReference>
<dbReference type="InterPro" id="IPR011008">
    <property type="entry name" value="Dimeric_a/b-barrel"/>
</dbReference>
<dbReference type="InterPro" id="IPR048328">
    <property type="entry name" value="Dyp_perox_C"/>
</dbReference>
<dbReference type="InterPro" id="IPR048327">
    <property type="entry name" value="Dyp_perox_N"/>
</dbReference>
<dbReference type="InterPro" id="IPR006314">
    <property type="entry name" value="Dyp_peroxidase"/>
</dbReference>
<dbReference type="InterPro" id="IPR006313">
    <property type="entry name" value="EfeB/EfeN"/>
</dbReference>
<dbReference type="InterPro" id="IPR006311">
    <property type="entry name" value="TAT_signal"/>
</dbReference>
<dbReference type="NCBIfam" id="TIGR01413">
    <property type="entry name" value="Dyp_perox_fam"/>
    <property type="match status" value="1"/>
</dbReference>
<dbReference type="NCBIfam" id="TIGR01412">
    <property type="entry name" value="tat_substr_1"/>
    <property type="match status" value="1"/>
</dbReference>
<dbReference type="PANTHER" id="PTHR30521:SF4">
    <property type="entry name" value="DEFERROCHELATASE"/>
    <property type="match status" value="1"/>
</dbReference>
<dbReference type="PANTHER" id="PTHR30521">
    <property type="entry name" value="DEFERROCHELATASE/PEROXIDASE"/>
    <property type="match status" value="1"/>
</dbReference>
<dbReference type="Pfam" id="PF20628">
    <property type="entry name" value="Dyp_perox_C"/>
    <property type="match status" value="1"/>
</dbReference>
<dbReference type="Pfam" id="PF04261">
    <property type="entry name" value="Dyp_perox_N"/>
    <property type="match status" value="1"/>
</dbReference>
<dbReference type="SUPFAM" id="SSF54909">
    <property type="entry name" value="Dimeric alpha+beta barrel"/>
    <property type="match status" value="1"/>
</dbReference>
<dbReference type="PROSITE" id="PS51404">
    <property type="entry name" value="DYP_PEROXIDASE"/>
    <property type="match status" value="1"/>
</dbReference>
<dbReference type="PROSITE" id="PS51318">
    <property type="entry name" value="TAT"/>
    <property type="match status" value="1"/>
</dbReference>
<comment type="function">
    <text evidence="2">Involved in the recovery of exogenous heme iron. Extracts iron from heme while preserving the protoporphyrin ring intact.</text>
</comment>
<comment type="catalytic activity">
    <reaction evidence="2">
        <text>heme b + 2 H(+) = protoporphyrin IX + Fe(2+)</text>
        <dbReference type="Rhea" id="RHEA:22584"/>
        <dbReference type="ChEBI" id="CHEBI:15378"/>
        <dbReference type="ChEBI" id="CHEBI:29033"/>
        <dbReference type="ChEBI" id="CHEBI:57306"/>
        <dbReference type="ChEBI" id="CHEBI:60344"/>
        <dbReference type="EC" id="4.98.1.1"/>
    </reaction>
    <physiologicalReaction direction="left-to-right" evidence="2">
        <dbReference type="Rhea" id="RHEA:22585"/>
    </physiologicalReaction>
</comment>
<comment type="cofactor">
    <cofactor evidence="1">
        <name>heme b</name>
        <dbReference type="ChEBI" id="CHEBI:60344"/>
    </cofactor>
    <text evidence="1">Binds 1 heme b (iron(II)-protoporphyrin IX) group non-covalently per subunit.</text>
</comment>
<comment type="subunit">
    <text evidence="1">Homodimer. Part of a ferrous iron transporter composed of EfeU, EfeO and EfeB (By similarity).</text>
</comment>
<comment type="subcellular location">
    <subcellularLocation>
        <location evidence="1">Periplasm</location>
    </subcellularLocation>
</comment>
<comment type="PTM">
    <text>Predicted to be exported by the Tat system. The position of the signal peptide cleavage has not been experimentally proven.</text>
</comment>
<comment type="similarity">
    <text evidence="4">Belongs to the DyP-type peroxidase family. EfeB subfamily.</text>
</comment>
<reference key="1">
    <citation type="journal article" date="2006" name="J. Bacteriol.">
        <title>Complete genome sequence of Yersinia pestis strains Antiqua and Nepal516: evidence of gene reduction in an emerging pathogen.</title>
        <authorList>
            <person name="Chain P.S.G."/>
            <person name="Hu P."/>
            <person name="Malfatti S.A."/>
            <person name="Radnedge L."/>
            <person name="Larimer F."/>
            <person name="Vergez L.M."/>
            <person name="Worsham P."/>
            <person name="Chu M.C."/>
            <person name="Andersen G.L."/>
        </authorList>
    </citation>
    <scope>NUCLEOTIDE SEQUENCE [LARGE SCALE GENOMIC DNA]</scope>
    <source>
        <strain>Nepal516</strain>
    </source>
</reference>
<reference key="2">
    <citation type="submission" date="2009-04" db="EMBL/GenBank/DDBJ databases">
        <title>Yersinia pestis Nepal516A whole genome shotgun sequencing project.</title>
        <authorList>
            <person name="Plunkett G. III"/>
            <person name="Anderson B.D."/>
            <person name="Baumler D.J."/>
            <person name="Burland V."/>
            <person name="Cabot E.L."/>
            <person name="Glasner J.D."/>
            <person name="Mau B."/>
            <person name="Neeno-Eckwall E."/>
            <person name="Perna N.T."/>
            <person name="Munk A.C."/>
            <person name="Tapia R."/>
            <person name="Green L.D."/>
            <person name="Rogers Y.C."/>
            <person name="Detter J.C."/>
            <person name="Bruce D.C."/>
            <person name="Brettin T.S."/>
        </authorList>
    </citation>
    <scope>NUCLEOTIDE SEQUENCE [LARGE SCALE GENOMIC DNA]</scope>
    <source>
        <strain>Nepal516</strain>
    </source>
</reference>
<sequence>MRDKTGPKFGPYQPDDEAVSPSRRRLILGMGMVSGALVLGGAKTAQAADCRSPDVAGTQDERWQKQPFYGQHQAGVLTPQQAAMMLVAFDVLATDKTSLIRLFKLLTERLAFLTTGGRAPSVNAKLPPLDSGIMGPEIYPDNLTVTVSVGNALFDERFGLQGQKPLRLQRMTRFPNDSLDAGLCHGDVMLQICANTNETVIHALRDIIKHTPDLLSVRWKREGFISAHAARSKGQDTPINLLGFKDGTANPKISNKPLINNVVWVSNNAGEPAWAVGGSYQVVRIIRFKVEFWDRTPLQEQQTIFGRDKNSGAPLGMQHEHDEPNYAKDPEGKVIPMDAHIRLANPRTIETQRNLMLRRGYSYSLGVSNSGQLDMGLLFVCYQSDLAQAFLTVQERLNGEALEEYVKPIGGGYFFTLPGVADANHYLAQSLLEA</sequence>
<keyword id="KW-0349">Heme</keyword>
<keyword id="KW-0408">Iron</keyword>
<keyword id="KW-0456">Lyase</keyword>
<keyword id="KW-0479">Metal-binding</keyword>
<keyword id="KW-0560">Oxidoreductase</keyword>
<keyword id="KW-0574">Periplasm</keyword>
<keyword id="KW-0575">Peroxidase</keyword>
<keyword id="KW-0732">Signal</keyword>
<proteinExistence type="inferred from homology"/>
<name>EFEB_YERPN</name>
<accession>Q1CHD5</accession>
<accession>C4GUF9</accession>
<organism>
    <name type="scientific">Yersinia pestis bv. Antiqua (strain Nepal516)</name>
    <dbReference type="NCBI Taxonomy" id="377628"/>
    <lineage>
        <taxon>Bacteria</taxon>
        <taxon>Pseudomonadati</taxon>
        <taxon>Pseudomonadota</taxon>
        <taxon>Gammaproteobacteria</taxon>
        <taxon>Enterobacterales</taxon>
        <taxon>Yersiniaceae</taxon>
        <taxon>Yersinia</taxon>
    </lineage>
</organism>
<evidence type="ECO:0000250" key="1"/>
<evidence type="ECO:0000250" key="2">
    <source>
        <dbReference type="UniProtKB" id="P31545"/>
    </source>
</evidence>
<evidence type="ECO:0000255" key="3">
    <source>
        <dbReference type="PROSITE-ProRule" id="PRU00648"/>
    </source>
</evidence>
<evidence type="ECO:0000305" key="4"/>